<comment type="function">
    <text evidence="1">May play a role in maturation and encapsidation of viral replicated genome, by promoting DNA homologous recombination. Exhibits endonuclease and 5'-&gt;3' exonuclease activities. The endonuclease activity displays a specificity for ssDNA in vitro (By similarity).</text>
</comment>
<comment type="subunit">
    <text evidence="1">Interacts with LEF-3.</text>
</comment>
<comment type="subcellular location">
    <subcellularLocation>
        <location evidence="2">Host nucleus</location>
    </subcellularLocation>
</comment>
<comment type="similarity">
    <text evidence="2">Belongs to the baculo-herpesviridae alkaline nuclease family.</text>
</comment>
<dbReference type="EC" id="3.1.-.-"/>
<dbReference type="EMBL" id="D13796">
    <property type="protein sequence ID" value="BAA02953.1"/>
    <property type="molecule type" value="Genomic_DNA"/>
</dbReference>
<dbReference type="EMBL" id="D13929">
    <property type="protein sequence ID" value="BAA03031.1"/>
    <property type="molecule type" value="Genomic_DNA"/>
</dbReference>
<dbReference type="EMBL" id="U75930">
    <property type="protein sequence ID" value="AAC59130.1"/>
    <property type="molecule type" value="Genomic_DNA"/>
</dbReference>
<dbReference type="PIR" id="E30857">
    <property type="entry name" value="E30857"/>
</dbReference>
<dbReference type="RefSeq" id="NP_046287.1">
    <property type="nucleotide sequence ID" value="NC_001875.2"/>
</dbReference>
<dbReference type="KEGG" id="vg:911977"/>
<dbReference type="OrthoDB" id="9306at10239"/>
<dbReference type="Proteomes" id="UP000009248">
    <property type="component" value="Genome"/>
</dbReference>
<dbReference type="GO" id="GO:0042025">
    <property type="term" value="C:host cell nucleus"/>
    <property type="evidence" value="ECO:0007669"/>
    <property type="project" value="UniProtKB-SubCell"/>
</dbReference>
<dbReference type="GO" id="GO:0004519">
    <property type="term" value="F:endonuclease activity"/>
    <property type="evidence" value="ECO:0007669"/>
    <property type="project" value="UniProtKB-KW"/>
</dbReference>
<dbReference type="GO" id="GO:0004527">
    <property type="term" value="F:exonuclease activity"/>
    <property type="evidence" value="ECO:0007669"/>
    <property type="project" value="UniProtKB-KW"/>
</dbReference>
<dbReference type="Gene3D" id="3.90.320.10">
    <property type="match status" value="1"/>
</dbReference>
<dbReference type="InterPro" id="IPR051703">
    <property type="entry name" value="NF-kappa-B_Signaling_Reg"/>
</dbReference>
<dbReference type="InterPro" id="IPR011604">
    <property type="entry name" value="PDDEXK-like_dom_sf"/>
</dbReference>
<dbReference type="InterPro" id="IPR011335">
    <property type="entry name" value="Restrct_endonuc-II-like"/>
</dbReference>
<dbReference type="InterPro" id="IPR034720">
    <property type="entry name" value="Viral_alk_exo"/>
</dbReference>
<dbReference type="PANTHER" id="PTHR46609">
    <property type="entry name" value="EXONUCLEASE, PHAGE-TYPE/RECB, C-TERMINAL DOMAIN-CONTAINING PROTEIN"/>
    <property type="match status" value="1"/>
</dbReference>
<dbReference type="PANTHER" id="PTHR46609:SF8">
    <property type="entry name" value="YQAJ VIRAL RECOMBINASE DOMAIN-CONTAINING PROTEIN"/>
    <property type="match status" value="1"/>
</dbReference>
<dbReference type="Pfam" id="PF01771">
    <property type="entry name" value="Viral_alk_exo"/>
    <property type="match status" value="1"/>
</dbReference>
<dbReference type="SUPFAM" id="SSF52980">
    <property type="entry name" value="Restriction endonuclease-like"/>
    <property type="match status" value="1"/>
</dbReference>
<reference key="1">
    <citation type="journal article" date="1989" name="J. Gen. Virol.">
        <title>Characterization of the genetic organization of the HindIII M region of the multicapsid nuclear polyhedrosis virus of Orgyia pseudotsugata reveals major differences among baculoviruses.</title>
        <authorList>
            <person name="Gombart A.F."/>
            <person name="Blissard G.W."/>
            <person name="Rohrmann G.F."/>
        </authorList>
    </citation>
    <scope>NUCLEOTIDE SEQUENCE [GENOMIC DNA]</scope>
</reference>
<reference key="2">
    <citation type="journal article" date="1997" name="Virology">
        <title>The sequence of the Orgyia pseudotsugata multinucleocapsid nuclear polyhedrosis virus genome.</title>
        <authorList>
            <person name="Ahrens C.H."/>
            <person name="Russell R.R."/>
            <person name="Funk C.J."/>
            <person name="Evans J."/>
            <person name="Harwood S."/>
            <person name="Rohrmann G.F."/>
        </authorList>
    </citation>
    <scope>NUCLEOTIDE SEQUENCE [LARGE SCALE GENOMIC DNA]</scope>
</reference>
<sequence>MHAPLTAEQRDVYDKYKFATYARSVALTRAQLDQWRDNKVIVPEPVSRAETLRVEAATRGQSKNALWNLLRLDRSTASRSSGGVALRSSALAFGNAQENRLKLANGELFERLGRLAAERAGCPVAETVLDCGMFISAFGLHSASPDAYFAMADGSCVPVEIKCPFNYRDTTVDQMRLELGKANRKYRVKHTALLVNKAGPAQFEVVKTHDHYRQMQRQMYVMRNAPVCFYVVRFKHNLVALAVPRDDDFCRKEAAAEGAAFVAFATENAGRVQFKRGDRRRASFAQNAADHGYNAAQVDALVRRGLYLSYGQLRCGHCDAFALDGPRAFELAMARPHEQCDGLALQEHEFDNVAFLDFTKRYTSLVDKRCDDARALRVDGFYVDDAGAVKTFCCGVHGSNASRRHLPTCSYYLAMGVNKIQNNM</sequence>
<evidence type="ECO:0000250" key="1"/>
<evidence type="ECO:0000305" key="2"/>
<proteinExistence type="inferred from homology"/>
<keyword id="KW-0255">Endonuclease</keyword>
<keyword id="KW-0269">Exonuclease</keyword>
<keyword id="KW-1048">Host nucleus</keyword>
<keyword id="KW-0378">Hydrolase</keyword>
<keyword id="KW-0426">Late protein</keyword>
<keyword id="KW-0540">Nuclease</keyword>
<keyword id="KW-1185">Reference proteome</keyword>
<organismHost>
    <name type="scientific">Orgyia pseudotsugata</name>
    <name type="common">Douglas-fir tussock moth</name>
    <dbReference type="NCBI Taxonomy" id="33414"/>
</organismHost>
<gene>
    <name type="primary">ALK-EXO</name>
    <name type="ORF">ORF131</name>
</gene>
<accession>P24081</accession>
<protein>
    <recommendedName>
        <fullName>Alkaline nuclease</fullName>
        <shortName>AN</shortName>
        <ecNumber>3.1.-.-</ecNumber>
    </recommendedName>
</protein>
<name>AN_NPVOP</name>
<feature type="chain" id="PRO_0000132812" description="Alkaline nuclease">
    <location>
        <begin position="1"/>
        <end position="424"/>
    </location>
</feature>
<organism>
    <name type="scientific">Orgyia pseudotsugata multicapsid polyhedrosis virus</name>
    <name type="common">OpMNPV</name>
    <dbReference type="NCBI Taxonomy" id="262177"/>
    <lineage>
        <taxon>Viruses</taxon>
        <taxon>Viruses incertae sedis</taxon>
        <taxon>Naldaviricetes</taxon>
        <taxon>Lefavirales</taxon>
        <taxon>Baculoviridae</taxon>
        <taxon>Alphabaculovirus</taxon>
        <taxon>Alphabaculovirus orpseudotsugatae</taxon>
    </lineage>
</organism>